<sequence>MTYRCLLPMVLLLCFSTTALSRSYSLLRFQQRRSAEVCQKLLGQLHSTPQHCLEAKMDFQVPEEMNQAQQFRKEDAILVIYEMLQQIFNILTRDFSSTGWSETIIEDLLVELYGQMNRLQPIQKEIMQEQNFTMGDTTVLHLKKYYFNLVQYLESKEYNRCAWTVVRVQILTNFSFLMRLTASLRD</sequence>
<organism>
    <name type="scientific">Bos taurus</name>
    <name type="common">Bovine</name>
    <dbReference type="NCBI Taxonomy" id="9913"/>
    <lineage>
        <taxon>Eukaryota</taxon>
        <taxon>Metazoa</taxon>
        <taxon>Chordata</taxon>
        <taxon>Craniata</taxon>
        <taxon>Vertebrata</taxon>
        <taxon>Euteleostomi</taxon>
        <taxon>Mammalia</taxon>
        <taxon>Eutheria</taxon>
        <taxon>Laurasiatheria</taxon>
        <taxon>Artiodactyla</taxon>
        <taxon>Ruminantia</taxon>
        <taxon>Pecora</taxon>
        <taxon>Bovidae</taxon>
        <taxon>Bovinae</taxon>
        <taxon>Bos</taxon>
    </lineage>
</organism>
<accession>P01577</accession>
<reference key="1">
    <citation type="journal article" date="1984" name="Biotechnology (N.Y.)">
        <title>The structure and bacterial expression of three distinct bovine interferon-beta genes.</title>
        <authorList>
            <person name="Leung D.W."/>
            <person name="Capon D.J."/>
            <person name="Goeddel D.V."/>
        </authorList>
    </citation>
    <scope>NUCLEOTIDE SEQUENCE [GENOMIC DNA]</scope>
</reference>
<protein>
    <recommendedName>
        <fullName>Interferon beta-3</fullName>
    </recommendedName>
</protein>
<keyword id="KW-0051">Antiviral defense</keyword>
<keyword id="KW-0202">Cytokine</keyword>
<keyword id="KW-1015">Disulfide bond</keyword>
<keyword id="KW-0325">Glycoprotein</keyword>
<keyword id="KW-1185">Reference proteome</keyword>
<keyword id="KW-0964">Secreted</keyword>
<keyword id="KW-0732">Signal</keyword>
<proteinExistence type="inferred from homology"/>
<gene>
    <name type="primary">IFNB3</name>
</gene>
<comment type="function">
    <text>Has antiviral, antibacterial and anticancer activities.</text>
</comment>
<comment type="subunit">
    <text>Monomer.</text>
</comment>
<comment type="subcellular location">
    <subcellularLocation>
        <location>Secreted</location>
    </subcellularLocation>
</comment>
<comment type="similarity">
    <text evidence="2">Belongs to the alpha/beta interferon family.</text>
</comment>
<name>IFNB3_BOVIN</name>
<dbReference type="EMBL" id="M15479">
    <property type="protein sequence ID" value="AAA30581.1"/>
    <property type="molecule type" value="Genomic_DNA"/>
</dbReference>
<dbReference type="PIR" id="A01841">
    <property type="entry name" value="IVBOB3"/>
</dbReference>
<dbReference type="RefSeq" id="NP_001107769.1">
    <property type="nucleotide sequence ID" value="NM_001114297.1"/>
</dbReference>
<dbReference type="SMR" id="P01577"/>
<dbReference type="FunCoup" id="P01577">
    <property type="interactions" value="327"/>
</dbReference>
<dbReference type="STRING" id="9913.ENSBTAP00000062103"/>
<dbReference type="GlyCosmos" id="P01577">
    <property type="glycosylation" value="2 sites, No reported glycans"/>
</dbReference>
<dbReference type="GlyGen" id="P01577">
    <property type="glycosylation" value="2 sites"/>
</dbReference>
<dbReference type="PaxDb" id="9913-ENSBTAP00000056510"/>
<dbReference type="GeneID" id="618946"/>
<dbReference type="KEGG" id="bta:618946"/>
<dbReference type="CTD" id="618946"/>
<dbReference type="eggNOG" id="ENOG502SQGR">
    <property type="taxonomic scope" value="Eukaryota"/>
</dbReference>
<dbReference type="InParanoid" id="P01577"/>
<dbReference type="OrthoDB" id="8922121at2759"/>
<dbReference type="Proteomes" id="UP000009136">
    <property type="component" value="Unplaced"/>
</dbReference>
<dbReference type="GO" id="GO:0005615">
    <property type="term" value="C:extracellular space"/>
    <property type="evidence" value="ECO:0000318"/>
    <property type="project" value="GO_Central"/>
</dbReference>
<dbReference type="GO" id="GO:0005125">
    <property type="term" value="F:cytokine activity"/>
    <property type="evidence" value="ECO:0000318"/>
    <property type="project" value="GO_Central"/>
</dbReference>
<dbReference type="GO" id="GO:0005132">
    <property type="term" value="F:type I interferon receptor binding"/>
    <property type="evidence" value="ECO:0000318"/>
    <property type="project" value="GO_Central"/>
</dbReference>
<dbReference type="GO" id="GO:0002250">
    <property type="term" value="P:adaptive immune response"/>
    <property type="evidence" value="ECO:0000318"/>
    <property type="project" value="GO_Central"/>
</dbReference>
<dbReference type="GO" id="GO:0002312">
    <property type="term" value="P:B cell activation involved in immune response"/>
    <property type="evidence" value="ECO:0000318"/>
    <property type="project" value="GO_Central"/>
</dbReference>
<dbReference type="GO" id="GO:0051607">
    <property type="term" value="P:defense response to virus"/>
    <property type="evidence" value="ECO:0007669"/>
    <property type="project" value="UniProtKB-KW"/>
</dbReference>
<dbReference type="GO" id="GO:0006959">
    <property type="term" value="P:humoral immune response"/>
    <property type="evidence" value="ECO:0000318"/>
    <property type="project" value="GO_Central"/>
</dbReference>
<dbReference type="GO" id="GO:0002323">
    <property type="term" value="P:natural killer cell activation involved in immune response"/>
    <property type="evidence" value="ECO:0000318"/>
    <property type="project" value="GO_Central"/>
</dbReference>
<dbReference type="GO" id="GO:0009891">
    <property type="term" value="P:positive regulation of biosynthetic process"/>
    <property type="evidence" value="ECO:0007669"/>
    <property type="project" value="UniProtKB-ARBA"/>
</dbReference>
<dbReference type="GO" id="GO:0043330">
    <property type="term" value="P:response to exogenous dsRNA"/>
    <property type="evidence" value="ECO:0000318"/>
    <property type="project" value="GO_Central"/>
</dbReference>
<dbReference type="GO" id="GO:0002286">
    <property type="term" value="P:T cell activation involved in immune response"/>
    <property type="evidence" value="ECO:0000318"/>
    <property type="project" value="GO_Central"/>
</dbReference>
<dbReference type="GO" id="GO:0060337">
    <property type="term" value="P:type I interferon-mediated signaling pathway"/>
    <property type="evidence" value="ECO:0000318"/>
    <property type="project" value="GO_Central"/>
</dbReference>
<dbReference type="CDD" id="cd00095">
    <property type="entry name" value="IFab"/>
    <property type="match status" value="1"/>
</dbReference>
<dbReference type="FunFam" id="1.20.1250.10:FF:000026">
    <property type="entry name" value="Interferon beta"/>
    <property type="match status" value="1"/>
</dbReference>
<dbReference type="Gene3D" id="1.20.1250.10">
    <property type="match status" value="1"/>
</dbReference>
<dbReference type="InterPro" id="IPR009079">
    <property type="entry name" value="4_helix_cytokine-like_core"/>
</dbReference>
<dbReference type="InterPro" id="IPR000471">
    <property type="entry name" value="Interferon_alpha/beta/delta"/>
</dbReference>
<dbReference type="PANTHER" id="PTHR11691:SF73">
    <property type="entry name" value="INTERFERON BETA"/>
    <property type="match status" value="1"/>
</dbReference>
<dbReference type="PANTHER" id="PTHR11691">
    <property type="entry name" value="TYPE I INTERFERON"/>
    <property type="match status" value="1"/>
</dbReference>
<dbReference type="Pfam" id="PF00143">
    <property type="entry name" value="Interferon"/>
    <property type="match status" value="1"/>
</dbReference>
<dbReference type="PRINTS" id="PR00266">
    <property type="entry name" value="INTERFERONAB"/>
</dbReference>
<dbReference type="SMART" id="SM00076">
    <property type="entry name" value="IFabd"/>
    <property type="match status" value="1"/>
</dbReference>
<dbReference type="SUPFAM" id="SSF47266">
    <property type="entry name" value="4-helical cytokines"/>
    <property type="match status" value="1"/>
</dbReference>
<dbReference type="PROSITE" id="PS00252">
    <property type="entry name" value="INTERFERON_A_B_D"/>
    <property type="match status" value="1"/>
</dbReference>
<evidence type="ECO:0000255" key="1"/>
<evidence type="ECO:0000305" key="2"/>
<feature type="signal peptide">
    <location>
        <begin position="1"/>
        <end position="21"/>
    </location>
</feature>
<feature type="chain" id="PRO_0000016398" description="Interferon beta-3">
    <location>
        <begin position="22"/>
        <end position="186"/>
    </location>
</feature>
<feature type="glycosylation site" description="N-linked (GlcNAc...) asparagine" evidence="1">
    <location>
        <position position="131"/>
    </location>
</feature>
<feature type="glycosylation site" description="N-linked (GlcNAc...) asparagine" evidence="1">
    <location>
        <position position="173"/>
    </location>
</feature>
<feature type="disulfide bond" evidence="2">
    <location>
        <begin position="52"/>
        <end position="161"/>
    </location>
</feature>